<protein>
    <recommendedName>
        <fullName>Bax inhibitor 1</fullName>
    </recommendedName>
    <alternativeName>
        <fullName>BH3 domain-containing protein BXI1</fullName>
    </alternativeName>
</protein>
<dbReference type="EMBL" id="U23084">
    <property type="protein sequence ID" value="AAC49093.1"/>
    <property type="molecule type" value="Genomic_DNA"/>
</dbReference>
<dbReference type="EMBL" id="Z71581">
    <property type="protein sequence ID" value="CAA96233.1"/>
    <property type="molecule type" value="Genomic_DNA"/>
</dbReference>
<dbReference type="EMBL" id="AY692679">
    <property type="protein sequence ID" value="AAT92698.1"/>
    <property type="molecule type" value="Genomic_DNA"/>
</dbReference>
<dbReference type="EMBL" id="BK006947">
    <property type="protein sequence ID" value="DAA10256.1"/>
    <property type="molecule type" value="Genomic_DNA"/>
</dbReference>
<dbReference type="PIR" id="S63281">
    <property type="entry name" value="S63281"/>
</dbReference>
<dbReference type="RefSeq" id="NP_014094.1">
    <property type="nucleotide sequence ID" value="NM_001183143.1"/>
</dbReference>
<dbReference type="BioGRID" id="35534">
    <property type="interactions" value="43"/>
</dbReference>
<dbReference type="DIP" id="DIP-7944N"/>
<dbReference type="FunCoup" id="P48558">
    <property type="interactions" value="760"/>
</dbReference>
<dbReference type="IntAct" id="P48558">
    <property type="interactions" value="16"/>
</dbReference>
<dbReference type="MINT" id="P48558"/>
<dbReference type="STRING" id="4932.YNL305C"/>
<dbReference type="TCDB" id="1.A.14.3.5">
    <property type="family name" value="the calcium transporter a (cata) family (formerly the testis-enhanced gene transfer (tegt) family)"/>
</dbReference>
<dbReference type="iPTMnet" id="P48558"/>
<dbReference type="PaxDb" id="4932-YNL305C"/>
<dbReference type="PeptideAtlas" id="P48558"/>
<dbReference type="EnsemblFungi" id="YNL305C_mRNA">
    <property type="protein sequence ID" value="YNL305C"/>
    <property type="gene ID" value="YNL305C"/>
</dbReference>
<dbReference type="GeneID" id="855411"/>
<dbReference type="KEGG" id="sce:YNL305C"/>
<dbReference type="AGR" id="SGD:S000005249"/>
<dbReference type="SGD" id="S000005249">
    <property type="gene designation" value="BXI1"/>
</dbReference>
<dbReference type="VEuPathDB" id="FungiDB:YNL305C"/>
<dbReference type="eggNOG" id="KOG2322">
    <property type="taxonomic scope" value="Eukaryota"/>
</dbReference>
<dbReference type="GeneTree" id="ENSGT01050000244940"/>
<dbReference type="HOGENOM" id="CLU_058671_0_0_1"/>
<dbReference type="InParanoid" id="P48558"/>
<dbReference type="OMA" id="FGVMSLY"/>
<dbReference type="OrthoDB" id="7933078at2759"/>
<dbReference type="BioCyc" id="YEAST:G3O-33292-MONOMER"/>
<dbReference type="BioGRID-ORCS" id="855411">
    <property type="hits" value="10 hits in 10 CRISPR screens"/>
</dbReference>
<dbReference type="PRO" id="PR:P48558"/>
<dbReference type="Proteomes" id="UP000002311">
    <property type="component" value="Chromosome XIV"/>
</dbReference>
<dbReference type="RNAct" id="P48558">
    <property type="molecule type" value="protein"/>
</dbReference>
<dbReference type="GO" id="GO:0005783">
    <property type="term" value="C:endoplasmic reticulum"/>
    <property type="evidence" value="ECO:0000314"/>
    <property type="project" value="SGD"/>
</dbReference>
<dbReference type="GO" id="GO:0005789">
    <property type="term" value="C:endoplasmic reticulum membrane"/>
    <property type="evidence" value="ECO:0007669"/>
    <property type="project" value="UniProtKB-SubCell"/>
</dbReference>
<dbReference type="GO" id="GO:0000324">
    <property type="term" value="C:fungal-type vacuole"/>
    <property type="evidence" value="ECO:0000314"/>
    <property type="project" value="SGD"/>
</dbReference>
<dbReference type="GO" id="GO:0016020">
    <property type="term" value="C:membrane"/>
    <property type="evidence" value="ECO:0000318"/>
    <property type="project" value="GO_Central"/>
</dbReference>
<dbReference type="GO" id="GO:0031966">
    <property type="term" value="C:mitochondrial membrane"/>
    <property type="evidence" value="ECO:0007669"/>
    <property type="project" value="UniProtKB-SubCell"/>
</dbReference>
<dbReference type="GO" id="GO:0005739">
    <property type="term" value="C:mitochondrion"/>
    <property type="evidence" value="ECO:0000314"/>
    <property type="project" value="SGD"/>
</dbReference>
<dbReference type="GO" id="GO:0005774">
    <property type="term" value="C:vacuolar membrane"/>
    <property type="evidence" value="ECO:0007669"/>
    <property type="project" value="UniProtKB-SubCell"/>
</dbReference>
<dbReference type="GO" id="GO:0005262">
    <property type="term" value="F:calcium channel activity"/>
    <property type="evidence" value="ECO:0000318"/>
    <property type="project" value="GO_Central"/>
</dbReference>
<dbReference type="GO" id="GO:0006915">
    <property type="term" value="P:apoptotic process"/>
    <property type="evidence" value="ECO:0000315"/>
    <property type="project" value="SGD"/>
</dbReference>
<dbReference type="GO" id="GO:0019722">
    <property type="term" value="P:calcium-mediated signaling"/>
    <property type="evidence" value="ECO:0000315"/>
    <property type="project" value="SGD"/>
</dbReference>
<dbReference type="GO" id="GO:0030968">
    <property type="term" value="P:endoplasmic reticulum unfolded protein response"/>
    <property type="evidence" value="ECO:0000315"/>
    <property type="project" value="SGD"/>
</dbReference>
<dbReference type="CDD" id="cd10429">
    <property type="entry name" value="GAAP_like"/>
    <property type="match status" value="1"/>
</dbReference>
<dbReference type="InterPro" id="IPR006214">
    <property type="entry name" value="Bax_inhibitor_1-related"/>
</dbReference>
<dbReference type="PANTHER" id="PTHR23291">
    <property type="entry name" value="BAX INHIBITOR-RELATED"/>
    <property type="match status" value="1"/>
</dbReference>
<dbReference type="PANTHER" id="PTHR23291:SF50">
    <property type="entry name" value="PROTEIN LIFEGUARD 4"/>
    <property type="match status" value="1"/>
</dbReference>
<dbReference type="Pfam" id="PF01027">
    <property type="entry name" value="Bax1-I"/>
    <property type="match status" value="1"/>
</dbReference>
<feature type="chain" id="PRO_0000203369" description="Bax inhibitor 1">
    <location>
        <begin position="1"/>
        <end position="297"/>
    </location>
</feature>
<feature type="topological domain" description="Lumenal" evidence="1">
    <location>
        <begin position="1"/>
        <end position="53"/>
    </location>
</feature>
<feature type="transmembrane region" description="Helical" evidence="1">
    <location>
        <begin position="54"/>
        <end position="74"/>
    </location>
</feature>
<feature type="topological domain" description="Cytoplasmic" evidence="1">
    <location>
        <begin position="75"/>
        <end position="85"/>
    </location>
</feature>
<feature type="transmembrane region" description="Helical" evidence="1">
    <location>
        <begin position="86"/>
        <end position="106"/>
    </location>
</feature>
<feature type="topological domain" description="Lumenal" evidence="1">
    <location>
        <begin position="107"/>
        <end position="146"/>
    </location>
</feature>
<feature type="transmembrane region" description="Helical" evidence="1">
    <location>
        <begin position="147"/>
        <end position="167"/>
    </location>
</feature>
<feature type="topological domain" description="Cytoplasmic" evidence="1">
    <location>
        <begin position="168"/>
        <end position="171"/>
    </location>
</feature>
<feature type="transmembrane region" description="Helical" evidence="1">
    <location>
        <begin position="172"/>
        <end position="192"/>
    </location>
</feature>
<feature type="topological domain" description="Lumenal" evidence="1">
    <location>
        <begin position="193"/>
        <end position="208"/>
    </location>
</feature>
<feature type="transmembrane region" description="Helical" evidence="1">
    <location>
        <begin position="209"/>
        <end position="229"/>
    </location>
</feature>
<feature type="topological domain" description="Cytoplasmic" evidence="1">
    <location>
        <begin position="230"/>
        <end position="239"/>
    </location>
</feature>
<feature type="transmembrane region" description="Helical" evidence="1">
    <location>
        <begin position="240"/>
        <end position="260"/>
    </location>
</feature>
<feature type="topological domain" description="Lumenal" evidence="1">
    <location>
        <begin position="261"/>
        <end position="270"/>
    </location>
</feature>
<feature type="transmembrane region" description="Helical" evidence="1">
    <location>
        <begin position="271"/>
        <end position="291"/>
    </location>
</feature>
<feature type="topological domain" description="Cytoplasmic" evidence="1">
    <location>
        <begin position="292"/>
        <end position="297"/>
    </location>
</feature>
<feature type="sequence conflict" description="In Ref. 4; AAT92698." evidence="6" ref="4">
    <original>S</original>
    <variation>A</variation>
    <location>
        <position position="84"/>
    </location>
</feature>
<evidence type="ECO:0000255" key="1"/>
<evidence type="ECO:0000269" key="2">
    <source>
    </source>
</evidence>
<evidence type="ECO:0000269" key="3">
    <source>
    </source>
</evidence>
<evidence type="ECO:0000269" key="4">
    <source>
    </source>
</evidence>
<evidence type="ECO:0000269" key="5">
    <source>
    </source>
</evidence>
<evidence type="ECO:0000305" key="6"/>
<organism>
    <name type="scientific">Saccharomyces cerevisiae (strain ATCC 204508 / S288c)</name>
    <name type="common">Baker's yeast</name>
    <dbReference type="NCBI Taxonomy" id="559292"/>
    <lineage>
        <taxon>Eukaryota</taxon>
        <taxon>Fungi</taxon>
        <taxon>Dikarya</taxon>
        <taxon>Ascomycota</taxon>
        <taxon>Saccharomycotina</taxon>
        <taxon>Saccharomycetes</taxon>
        <taxon>Saccharomycetales</taxon>
        <taxon>Saccharomycetaceae</taxon>
        <taxon>Saccharomyces</taxon>
    </lineage>
</organism>
<reference key="1">
    <citation type="journal article" date="1995" name="Yeast">
        <title>Sequence analysis of a 30 kb DNA segment from yeast chromosome XIV carrying a ribosomal protein gene cluster, the genes encoding a plasma membrane protein and a subunit of replication factor C, and a novel putative serine/threonine protein kinase gene.</title>
        <authorList>
            <person name="Maurer K.C.T."/>
            <person name="Urbanus J.H.M."/>
            <person name="Planta R.J."/>
        </authorList>
    </citation>
    <scope>NUCLEOTIDE SEQUENCE [GENOMIC DNA]</scope>
    <source>
        <strain>ATCC 96604 / S288c / FY1679</strain>
    </source>
</reference>
<reference key="2">
    <citation type="journal article" date="1997" name="Nature">
        <title>The nucleotide sequence of Saccharomyces cerevisiae chromosome XIV and its evolutionary implications.</title>
        <authorList>
            <person name="Philippsen P."/>
            <person name="Kleine K."/>
            <person name="Poehlmann R."/>
            <person name="Duesterhoeft A."/>
            <person name="Hamberg K."/>
            <person name="Hegemann J.H."/>
            <person name="Obermaier B."/>
            <person name="Urrestarazu L.A."/>
            <person name="Aert R."/>
            <person name="Albermann K."/>
            <person name="Altmann R."/>
            <person name="Andre B."/>
            <person name="Baladron V."/>
            <person name="Ballesta J.P.G."/>
            <person name="Becam A.-M."/>
            <person name="Beinhauer J.D."/>
            <person name="Boskovic J."/>
            <person name="Buitrago M.J."/>
            <person name="Bussereau F."/>
            <person name="Coster F."/>
            <person name="Crouzet M."/>
            <person name="D'Angelo M."/>
            <person name="Dal Pero F."/>
            <person name="De Antoni A."/>
            <person name="del Rey F."/>
            <person name="Doignon F."/>
            <person name="Domdey H."/>
            <person name="Dubois E."/>
            <person name="Fiedler T.A."/>
            <person name="Fleig U."/>
            <person name="Floeth M."/>
            <person name="Fritz C."/>
            <person name="Gaillardin C."/>
            <person name="Garcia-Cantalejo J.M."/>
            <person name="Glansdorff N."/>
            <person name="Goffeau A."/>
            <person name="Gueldener U."/>
            <person name="Herbert C.J."/>
            <person name="Heumann K."/>
            <person name="Heuss-Neitzel D."/>
            <person name="Hilbert H."/>
            <person name="Hinni K."/>
            <person name="Iraqui Houssaini I."/>
            <person name="Jacquet M."/>
            <person name="Jimenez A."/>
            <person name="Jonniaux J.-L."/>
            <person name="Karpfinger-Hartl L."/>
            <person name="Lanfranchi G."/>
            <person name="Lepingle A."/>
            <person name="Levesque H."/>
            <person name="Lyck R."/>
            <person name="Maftahi M."/>
            <person name="Mallet L."/>
            <person name="Maurer C.T.C."/>
            <person name="Messenguy F."/>
            <person name="Mewes H.-W."/>
            <person name="Moestl D."/>
            <person name="Nasr F."/>
            <person name="Nicaud J.-M."/>
            <person name="Niedenthal R.K."/>
            <person name="Pandolfo D."/>
            <person name="Pierard A."/>
            <person name="Piravandi E."/>
            <person name="Planta R.J."/>
            <person name="Pohl T.M."/>
            <person name="Purnelle B."/>
            <person name="Rebischung C."/>
            <person name="Remacha M.A."/>
            <person name="Revuelta J.L."/>
            <person name="Rinke M."/>
            <person name="Saiz J.E."/>
            <person name="Sartorello F."/>
            <person name="Scherens B."/>
            <person name="Sen-Gupta M."/>
            <person name="Soler-Mira A."/>
            <person name="Urbanus J.H.M."/>
            <person name="Valle G."/>
            <person name="Van Dyck L."/>
            <person name="Verhasselt P."/>
            <person name="Vierendeels F."/>
            <person name="Vissers S."/>
            <person name="Voet M."/>
            <person name="Volckaert G."/>
            <person name="Wach A."/>
            <person name="Wambutt R."/>
            <person name="Wedler H."/>
            <person name="Zollner A."/>
            <person name="Hani J."/>
        </authorList>
    </citation>
    <scope>NUCLEOTIDE SEQUENCE [LARGE SCALE GENOMIC DNA]</scope>
    <source>
        <strain>ATCC 204508 / S288c</strain>
    </source>
</reference>
<reference key="3">
    <citation type="journal article" date="2014" name="G3 (Bethesda)">
        <title>The reference genome sequence of Saccharomyces cerevisiae: Then and now.</title>
        <authorList>
            <person name="Engel S.R."/>
            <person name="Dietrich F.S."/>
            <person name="Fisk D.G."/>
            <person name="Binkley G."/>
            <person name="Balakrishnan R."/>
            <person name="Costanzo M.C."/>
            <person name="Dwight S.S."/>
            <person name="Hitz B.C."/>
            <person name="Karra K."/>
            <person name="Nash R.S."/>
            <person name="Weng S."/>
            <person name="Wong E.D."/>
            <person name="Lloyd P."/>
            <person name="Skrzypek M.S."/>
            <person name="Miyasato S.R."/>
            <person name="Simison M."/>
            <person name="Cherry J.M."/>
        </authorList>
    </citation>
    <scope>GENOME REANNOTATION</scope>
    <source>
        <strain>ATCC 204508 / S288c</strain>
    </source>
</reference>
<reference key="4">
    <citation type="journal article" date="2007" name="Genome Res.">
        <title>Approaching a complete repository of sequence-verified protein-encoding clones for Saccharomyces cerevisiae.</title>
        <authorList>
            <person name="Hu Y."/>
            <person name="Rolfs A."/>
            <person name="Bhullar B."/>
            <person name="Murthy T.V.S."/>
            <person name="Zhu C."/>
            <person name="Berger M.F."/>
            <person name="Camargo A.A."/>
            <person name="Kelley F."/>
            <person name="McCarron S."/>
            <person name="Jepson D."/>
            <person name="Richardson A."/>
            <person name="Raphael J."/>
            <person name="Moreira D."/>
            <person name="Taycher E."/>
            <person name="Zuo D."/>
            <person name="Mohr S."/>
            <person name="Kane M.F."/>
            <person name="Williamson J."/>
            <person name="Simpson A.J.G."/>
            <person name="Bulyk M.L."/>
            <person name="Harlow E."/>
            <person name="Marsischky G."/>
            <person name="Kolodner R.D."/>
            <person name="LaBaer J."/>
        </authorList>
    </citation>
    <scope>NUCLEOTIDE SEQUENCE [GENOMIC DNA]</scope>
    <source>
        <strain>ATCC 204508 / S288c</strain>
    </source>
</reference>
<reference key="5">
    <citation type="journal article" date="2003" name="Nature">
        <title>Global analysis of protein localization in budding yeast.</title>
        <authorList>
            <person name="Huh W.-K."/>
            <person name="Falvo J.V."/>
            <person name="Gerke L.C."/>
            <person name="Carroll A.S."/>
            <person name="Howson R.W."/>
            <person name="Weissman J.S."/>
            <person name="O'Shea E.K."/>
        </authorList>
    </citation>
    <scope>SUBCELLULAR LOCATION [LARGE SCALE ANALYSIS]</scope>
</reference>
<reference key="6">
    <citation type="journal article" date="2006" name="Proc. Natl. Acad. Sci. U.S.A.">
        <title>A global topology map of the Saccharomyces cerevisiae membrane proteome.</title>
        <authorList>
            <person name="Kim H."/>
            <person name="Melen K."/>
            <person name="Oesterberg M."/>
            <person name="von Heijne G."/>
        </authorList>
    </citation>
    <scope>TOPOLOGY [LARGE SCALE ANALYSIS]</scope>
    <source>
        <strain>ATCC 208353 / W303-1A</strain>
    </source>
</reference>
<reference key="7">
    <citation type="journal article" date="2011" name="EMBO J.">
        <title>A yeast BH3-only protein mediates the mitochondrial pathway of apoptosis.</title>
        <authorList>
            <person name="Buttner S."/>
            <person name="Ruli D."/>
            <person name="Vogtle F.N."/>
            <person name="Galluzzi L."/>
            <person name="Moitzi B."/>
            <person name="Eisenberg T."/>
            <person name="Kepp O."/>
            <person name="Habernig L."/>
            <person name="Carmona-Gutierrez D."/>
            <person name="Rockenfeller P."/>
            <person name="Laun P."/>
            <person name="Breitenbach M."/>
            <person name="Khoury C."/>
            <person name="Frohlich K.U."/>
            <person name="Rechberger G."/>
            <person name="Meisinger C."/>
            <person name="Kroemer G."/>
            <person name="Madeo F."/>
        </authorList>
    </citation>
    <scope>FUNCTION</scope>
    <scope>SUBCELLULAR LOCATION</scope>
</reference>
<reference key="8">
    <citation type="journal article" date="2011" name="EMBO J.">
        <title>BAX inhibitor-1 regulates autophagy by controlling the IRE1alpha branch of the unfolded protein response.</title>
        <authorList>
            <person name="Castillo K."/>
            <person name="Rojas-Rivera D."/>
            <person name="Lisbona F."/>
            <person name="Caballero B."/>
            <person name="Nassif M."/>
            <person name="Court F.A."/>
            <person name="Schuck S."/>
            <person name="Ibar C."/>
            <person name="Walter P."/>
            <person name="Sierralta J."/>
            <person name="Glavic A."/>
            <person name="Hetz C."/>
        </authorList>
    </citation>
    <scope>FUNCTION</scope>
    <scope>DISRUPTION PHENOTYPE</scope>
</reference>
<reference key="9">
    <citation type="journal article" date="2011" name="PLoS ONE">
        <title>Yeast Bax inhibitor, Bxi1p, is an ER-localized protein that links the unfolded protein response and programmed cell death in Saccharomyces cerevisiae.</title>
        <authorList>
            <person name="Cebulski J."/>
            <person name="Malouin J."/>
            <person name="Pinches N."/>
            <person name="Cascio V."/>
            <person name="Austriaco N."/>
        </authorList>
    </citation>
    <scope>FUNCTION</scope>
    <scope>SUBCELLULAR LOCATION</scope>
</reference>
<name>BXI1_YEAST</name>
<gene>
    <name type="primary">BXI1</name>
    <name type="synonym">YBH3</name>
    <name type="ordered locus">YNL305C</name>
    <name type="ORF">N0405</name>
</gene>
<proteinExistence type="evidence at protein level"/>
<accession>P48558</accession>
<accession>D6W0P0</accession>
<accession>Q6B2Q1</accession>
<sequence>MSGPPPPYEEQSSHLYGQPASSQDGNAFIPEDFKYSTVVISCEPIIRQRFMHKVYSLLSCQLLASLSFCYWASVSTSLQNFIMSHIALFYICMVVSLVSCIWLAVSPRPEDYEASVPEPLLTGSSEEPAQEQRRLPWYVLSSYKQKLTLLSIFTLSEAYCLSLVTLAYDKDTVLSALLITTIVVVGVSLTALSERFENVLNSATSIYYWLNWGLWIMIGMGLTALLFGWNTHSSKFNLLYGWLGAILFTAYLFIDTQLIFRKVYPDEEVRCAMMLYLDIVNLFLSILRILANSNDDN</sequence>
<keyword id="KW-0053">Apoptosis</keyword>
<keyword id="KW-0256">Endoplasmic reticulum</keyword>
<keyword id="KW-0472">Membrane</keyword>
<keyword id="KW-0496">Mitochondrion</keyword>
<keyword id="KW-1185">Reference proteome</keyword>
<keyword id="KW-0812">Transmembrane</keyword>
<keyword id="KW-1133">Transmembrane helix</keyword>
<keyword id="KW-0926">Vacuole</keyword>
<comment type="function">
    <text evidence="3 4 5">Links the unfolded protein response and programmed cell death and mediates mitochondrial-dependent apoptosis (PubMed:21673659, PubMed:21673967). Induces cell death and disruption of the mitochondrial transmembrane potential via the mitochondrial phosphate carrier MIR1 (PubMed:21673659). Dispensible for starvation-induced autophagy (PubMed:21926971).</text>
</comment>
<comment type="interaction">
    <interactant intactId="EBI-28349">
        <id>P48558</id>
    </interactant>
    <interactant intactId="EBI-29278">
        <id>Q08234</id>
        <label>YOL075C</label>
    </interactant>
    <organismsDiffer>false</organismsDiffer>
    <experiments>2</experiments>
</comment>
<comment type="subcellular location">
    <subcellularLocation>
        <location evidence="4">Endoplasmic reticulum membrane</location>
        <topology evidence="1">Multi-pass membrane protein</topology>
    </subcellularLocation>
    <subcellularLocation>
        <location evidence="2 3 4">Vacuole membrane</location>
        <topology evidence="1">Multi-pass membrane protein</topology>
    </subcellularLocation>
    <subcellularLocation>
        <location evidence="3">Mitochondrion membrane</location>
        <topology evidence="1">Multi-pass membrane protein</topology>
    </subcellularLocation>
    <text evidence="3">Translocated from predominantly vacuolar sites in healthy cells to mitochondria upon apoptosis induction.</text>
</comment>
<comment type="disruption phenotype">
    <text evidence="5">No effect on autophagy during nitrogen starvation.</text>
</comment>
<comment type="similarity">
    <text evidence="6">Belongs to the BI1 family. LFG subfamily.</text>
</comment>